<sequence length="155" mass="17600">MASRSAGSLITHNNVTYIPPALMPGYRGHVPTASFTYGDTYGNTSARCFQDFRSTVLNSSRSPYCQGGQFPTSHSNDPALVIGHRSRGWDRFLHSPSWSRYNVDFKRSDELKQFHRAAEQHRDHYRDKSGTAHQVPHFIIPVKNPQTFPLPQQVL</sequence>
<accession>Q5M7F8</accession>
<evidence type="ECO:0000250" key="1">
    <source>
        <dbReference type="UniProtKB" id="A6NJV1"/>
    </source>
</evidence>
<evidence type="ECO:0000305" key="2"/>
<proteinExistence type="evidence at transcript level"/>
<keyword id="KW-0966">Cell projection</keyword>
<keyword id="KW-0963">Cytoplasm</keyword>
<keyword id="KW-0206">Cytoskeleton</keyword>
<keyword id="KW-1185">Reference proteome</keyword>
<dbReference type="EMBL" id="BC088672">
    <property type="protein sequence ID" value="AAH88672.1"/>
    <property type="molecule type" value="mRNA"/>
</dbReference>
<dbReference type="SMR" id="Q5M7F8"/>
<dbReference type="DNASU" id="779174"/>
<dbReference type="GeneID" id="779174"/>
<dbReference type="AGR" id="Xenbase:XB-GENE-6252225"/>
<dbReference type="CTD" id="779174"/>
<dbReference type="Xenbase" id="XB-GENE-6252225">
    <property type="gene designation" value="cimip2c.S"/>
</dbReference>
<dbReference type="Proteomes" id="UP000186698">
    <property type="component" value="Unplaced"/>
</dbReference>
<dbReference type="GO" id="GO:0005879">
    <property type="term" value="C:axonemal microtubule"/>
    <property type="evidence" value="ECO:0000250"/>
    <property type="project" value="UniProtKB"/>
</dbReference>
<dbReference type="InterPro" id="IPR052329">
    <property type="entry name" value="CIMIP2C"/>
</dbReference>
<dbReference type="InterPro" id="IPR018902">
    <property type="entry name" value="CMI2A-C-like_dom"/>
</dbReference>
<dbReference type="PANTHER" id="PTHR34924:SF1">
    <property type="entry name" value="PROTEIN FAM166C"/>
    <property type="match status" value="1"/>
</dbReference>
<dbReference type="PANTHER" id="PTHR34924">
    <property type="entry name" value="UPF0573 PROTEIN C2ORF70"/>
    <property type="match status" value="1"/>
</dbReference>
<dbReference type="Pfam" id="PF10629">
    <property type="entry name" value="CMI2B-like"/>
    <property type="match status" value="1"/>
</dbReference>
<gene>
    <name type="primary">cimip2ca</name>
    <name type="synonym">fam166ca</name>
</gene>
<name>CM2CA_XENLA</name>
<organism>
    <name type="scientific">Xenopus laevis</name>
    <name type="common">African clawed frog</name>
    <dbReference type="NCBI Taxonomy" id="8355"/>
    <lineage>
        <taxon>Eukaryota</taxon>
        <taxon>Metazoa</taxon>
        <taxon>Chordata</taxon>
        <taxon>Craniata</taxon>
        <taxon>Vertebrata</taxon>
        <taxon>Euteleostomi</taxon>
        <taxon>Amphibia</taxon>
        <taxon>Batrachia</taxon>
        <taxon>Anura</taxon>
        <taxon>Pipoidea</taxon>
        <taxon>Pipidae</taxon>
        <taxon>Xenopodinae</taxon>
        <taxon>Xenopus</taxon>
        <taxon>Xenopus</taxon>
    </lineage>
</organism>
<feature type="chain" id="PRO_0000332279" description="Ciliary microtubule inner protein 2C">
    <location>
        <begin position="1"/>
        <end position="155"/>
    </location>
</feature>
<protein>
    <recommendedName>
        <fullName>Ciliary microtubule inner protein 2C</fullName>
    </recommendedName>
</protein>
<reference key="1">
    <citation type="submission" date="2004-12" db="EMBL/GenBank/DDBJ databases">
        <authorList>
            <consortium name="NIH - Xenopus Gene Collection (XGC) project"/>
        </authorList>
    </citation>
    <scope>NUCLEOTIDE SEQUENCE [LARGE SCALE MRNA]</scope>
    <source>
        <tissue>Testis</tissue>
    </source>
</reference>
<comment type="function">
    <text evidence="1">Microtubule inner protein (MIP) part of the dynein-decorated doublet microtubules (DMTs) in cilia axoneme, which is required for motile cilia beating.</text>
</comment>
<comment type="subcellular location">
    <subcellularLocation>
        <location evidence="1">Cytoplasm</location>
        <location evidence="1">Cytoskeleton</location>
        <location evidence="1">Cilium axoneme</location>
    </subcellularLocation>
</comment>
<comment type="similarity">
    <text evidence="2">Belongs to the CIMIP2 family.</text>
</comment>